<organism>
    <name type="scientific">Shewanella piezotolerans (strain WP3 / JCM 13877)</name>
    <dbReference type="NCBI Taxonomy" id="225849"/>
    <lineage>
        <taxon>Bacteria</taxon>
        <taxon>Pseudomonadati</taxon>
        <taxon>Pseudomonadota</taxon>
        <taxon>Gammaproteobacteria</taxon>
        <taxon>Alteromonadales</taxon>
        <taxon>Shewanellaceae</taxon>
        <taxon>Shewanella</taxon>
    </lineage>
</organism>
<comment type="function">
    <text evidence="1">Splits dipeptides with a prolyl residue in the C-terminal position.</text>
</comment>
<comment type="catalytic activity">
    <reaction evidence="1">
        <text>Xaa-L-Pro dipeptide + H2O = an L-alpha-amino acid + L-proline</text>
        <dbReference type="Rhea" id="RHEA:76407"/>
        <dbReference type="ChEBI" id="CHEBI:15377"/>
        <dbReference type="ChEBI" id="CHEBI:59869"/>
        <dbReference type="ChEBI" id="CHEBI:60039"/>
        <dbReference type="ChEBI" id="CHEBI:195196"/>
        <dbReference type="EC" id="3.4.13.9"/>
    </reaction>
</comment>
<comment type="cofactor">
    <cofactor evidence="1">
        <name>Mn(2+)</name>
        <dbReference type="ChEBI" id="CHEBI:29035"/>
    </cofactor>
    <text evidence="1">Binds 2 manganese ions per subunit.</text>
</comment>
<comment type="similarity">
    <text evidence="1">Belongs to the peptidase M24B family. Bacterial-type prolidase subfamily.</text>
</comment>
<keyword id="KW-0224">Dipeptidase</keyword>
<keyword id="KW-0378">Hydrolase</keyword>
<keyword id="KW-0464">Manganese</keyword>
<keyword id="KW-0479">Metal-binding</keyword>
<keyword id="KW-0482">Metalloprotease</keyword>
<keyword id="KW-0645">Protease</keyword>
<accession>B8CHA2</accession>
<reference key="1">
    <citation type="journal article" date="2008" name="PLoS ONE">
        <title>Environmental adaptation: genomic analysis of the piezotolerant and psychrotolerant deep-sea iron reducing bacterium Shewanella piezotolerans WP3.</title>
        <authorList>
            <person name="Wang F."/>
            <person name="Wang J."/>
            <person name="Jian H."/>
            <person name="Zhang B."/>
            <person name="Li S."/>
            <person name="Wang F."/>
            <person name="Zeng X."/>
            <person name="Gao L."/>
            <person name="Bartlett D.H."/>
            <person name="Yu J."/>
            <person name="Hu S."/>
            <person name="Xiao X."/>
        </authorList>
    </citation>
    <scope>NUCLEOTIDE SEQUENCE [LARGE SCALE GENOMIC DNA]</scope>
    <source>
        <strain>WP3 / JCM 13877</strain>
    </source>
</reference>
<feature type="chain" id="PRO_1000140331" description="Xaa-Pro dipeptidase">
    <location>
        <begin position="1"/>
        <end position="440"/>
    </location>
</feature>
<feature type="binding site" evidence="1">
    <location>
        <position position="244"/>
    </location>
    <ligand>
        <name>Mn(2+)</name>
        <dbReference type="ChEBI" id="CHEBI:29035"/>
        <label>2</label>
    </ligand>
</feature>
<feature type="binding site" evidence="1">
    <location>
        <position position="255"/>
    </location>
    <ligand>
        <name>Mn(2+)</name>
        <dbReference type="ChEBI" id="CHEBI:29035"/>
        <label>1</label>
    </ligand>
</feature>
<feature type="binding site" evidence="1">
    <location>
        <position position="255"/>
    </location>
    <ligand>
        <name>Mn(2+)</name>
        <dbReference type="ChEBI" id="CHEBI:29035"/>
        <label>2</label>
    </ligand>
</feature>
<feature type="binding site" evidence="1">
    <location>
        <position position="335"/>
    </location>
    <ligand>
        <name>Mn(2+)</name>
        <dbReference type="ChEBI" id="CHEBI:29035"/>
        <label>1</label>
    </ligand>
</feature>
<feature type="binding site" evidence="1">
    <location>
        <position position="380"/>
    </location>
    <ligand>
        <name>Mn(2+)</name>
        <dbReference type="ChEBI" id="CHEBI:29035"/>
        <label>1</label>
    </ligand>
</feature>
<feature type="binding site" evidence="1">
    <location>
        <position position="419"/>
    </location>
    <ligand>
        <name>Mn(2+)</name>
        <dbReference type="ChEBI" id="CHEBI:29035"/>
        <label>1</label>
    </ligand>
</feature>
<feature type="binding site" evidence="1">
    <location>
        <position position="419"/>
    </location>
    <ligand>
        <name>Mn(2+)</name>
        <dbReference type="ChEBI" id="CHEBI:29035"/>
        <label>2</label>
    </ligand>
</feature>
<name>PEPQ_SHEPW</name>
<protein>
    <recommendedName>
        <fullName evidence="1">Xaa-Pro dipeptidase</fullName>
        <shortName evidence="1">X-Pro dipeptidase</shortName>
        <ecNumber evidence="1">3.4.13.9</ecNumber>
    </recommendedName>
    <alternativeName>
        <fullName evidence="1">Imidodipeptidase</fullName>
    </alternativeName>
    <alternativeName>
        <fullName evidence="1">Proline dipeptidase</fullName>
        <shortName evidence="1">Prolidase</shortName>
    </alternativeName>
</protein>
<dbReference type="EC" id="3.4.13.9" evidence="1"/>
<dbReference type="EMBL" id="CP000472">
    <property type="protein sequence ID" value="ACJ26894.1"/>
    <property type="molecule type" value="Genomic_DNA"/>
</dbReference>
<dbReference type="RefSeq" id="WP_020910278.1">
    <property type="nucleotide sequence ID" value="NC_011566.1"/>
</dbReference>
<dbReference type="SMR" id="B8CHA2"/>
<dbReference type="STRING" id="225849.swp_0046"/>
<dbReference type="MEROPS" id="M24.003"/>
<dbReference type="KEGG" id="swp:swp_0046"/>
<dbReference type="eggNOG" id="COG0006">
    <property type="taxonomic scope" value="Bacteria"/>
</dbReference>
<dbReference type="HOGENOM" id="CLU_050675_0_0_6"/>
<dbReference type="OrthoDB" id="9806388at2"/>
<dbReference type="Proteomes" id="UP000000753">
    <property type="component" value="Chromosome"/>
</dbReference>
<dbReference type="GO" id="GO:0005829">
    <property type="term" value="C:cytosol"/>
    <property type="evidence" value="ECO:0007669"/>
    <property type="project" value="TreeGrafter"/>
</dbReference>
<dbReference type="GO" id="GO:0004177">
    <property type="term" value="F:aminopeptidase activity"/>
    <property type="evidence" value="ECO:0007669"/>
    <property type="project" value="TreeGrafter"/>
</dbReference>
<dbReference type="GO" id="GO:0046872">
    <property type="term" value="F:metal ion binding"/>
    <property type="evidence" value="ECO:0007669"/>
    <property type="project" value="UniProtKB-KW"/>
</dbReference>
<dbReference type="GO" id="GO:0008235">
    <property type="term" value="F:metalloexopeptidase activity"/>
    <property type="evidence" value="ECO:0007669"/>
    <property type="project" value="UniProtKB-UniRule"/>
</dbReference>
<dbReference type="GO" id="GO:0016795">
    <property type="term" value="F:phosphoric triester hydrolase activity"/>
    <property type="evidence" value="ECO:0007669"/>
    <property type="project" value="InterPro"/>
</dbReference>
<dbReference type="GO" id="GO:0102009">
    <property type="term" value="F:proline dipeptidase activity"/>
    <property type="evidence" value="ECO:0007669"/>
    <property type="project" value="UniProtKB-EC"/>
</dbReference>
<dbReference type="GO" id="GO:0006508">
    <property type="term" value="P:proteolysis"/>
    <property type="evidence" value="ECO:0007669"/>
    <property type="project" value="UniProtKB-KW"/>
</dbReference>
<dbReference type="CDD" id="cd01087">
    <property type="entry name" value="Prolidase"/>
    <property type="match status" value="1"/>
</dbReference>
<dbReference type="Gene3D" id="3.90.230.10">
    <property type="entry name" value="Creatinase/methionine aminopeptidase superfamily"/>
    <property type="match status" value="1"/>
</dbReference>
<dbReference type="Gene3D" id="3.40.350.10">
    <property type="entry name" value="Creatinase/prolidase N-terminal domain"/>
    <property type="match status" value="1"/>
</dbReference>
<dbReference type="HAMAP" id="MF_01279">
    <property type="entry name" value="X_Pro_dipeptid"/>
    <property type="match status" value="1"/>
</dbReference>
<dbReference type="InterPro" id="IPR029149">
    <property type="entry name" value="Creatin/AminoP/Spt16_N"/>
</dbReference>
<dbReference type="InterPro" id="IPR036005">
    <property type="entry name" value="Creatinase/aminopeptidase-like"/>
</dbReference>
<dbReference type="InterPro" id="IPR048819">
    <property type="entry name" value="PepQ_N"/>
</dbReference>
<dbReference type="InterPro" id="IPR000994">
    <property type="entry name" value="Pept_M24"/>
</dbReference>
<dbReference type="InterPro" id="IPR001131">
    <property type="entry name" value="Peptidase_M24B_aminopep-P_CS"/>
</dbReference>
<dbReference type="InterPro" id="IPR052433">
    <property type="entry name" value="X-Pro_dipept-like"/>
</dbReference>
<dbReference type="InterPro" id="IPR022846">
    <property type="entry name" value="X_Pro_dipept"/>
</dbReference>
<dbReference type="NCBIfam" id="NF010133">
    <property type="entry name" value="PRK13607.1"/>
    <property type="match status" value="1"/>
</dbReference>
<dbReference type="PANTHER" id="PTHR43226">
    <property type="entry name" value="XAA-PRO AMINOPEPTIDASE 3"/>
    <property type="match status" value="1"/>
</dbReference>
<dbReference type="PANTHER" id="PTHR43226:SF8">
    <property type="entry name" value="XAA-PRO DIPEPTIDASE"/>
    <property type="match status" value="1"/>
</dbReference>
<dbReference type="Pfam" id="PF21216">
    <property type="entry name" value="PepQ_N"/>
    <property type="match status" value="1"/>
</dbReference>
<dbReference type="Pfam" id="PF00557">
    <property type="entry name" value="Peptidase_M24"/>
    <property type="match status" value="1"/>
</dbReference>
<dbReference type="SUPFAM" id="SSF55920">
    <property type="entry name" value="Creatinase/aminopeptidase"/>
    <property type="match status" value="1"/>
</dbReference>
<dbReference type="PROSITE" id="PS00491">
    <property type="entry name" value="PROLINE_PEPTIDASE"/>
    <property type="match status" value="1"/>
</dbReference>
<evidence type="ECO:0000255" key="1">
    <source>
        <dbReference type="HAMAP-Rule" id="MF_01279"/>
    </source>
</evidence>
<proteinExistence type="inferred from homology"/>
<gene>
    <name evidence="1" type="primary">pepQ</name>
    <name type="ordered locus">swp_0046</name>
</gene>
<sequence length="440" mass="49689">MEQLAHLYHEHISELNRRVADITSRENLSGLVIHSGQPHRQFLDDMDYPFKVNPHFKAWLPVIDNPNSWLVVNGHDKPTLIFYRPVDFWHKVADEPTDFWAEYVDIKYLTKADKVAEFLPADIDNWAYIGEHLDVADVLGFNRRNPDSVLSYLNYHRADKTAYELACMRKSNSIAVTGHQAAKTAFYNGASEFEILQVYLSAISQGENQVPYSSIVALNENAAILHYTALEQTSPPQRLSFLIDAGANFHGYASDITRSYAFEKNIFDDLITAMDSMQLQIIAMMKPGVSYVDLHVATHHKLAQILIDFDIATGDAAGLVEQGITSAFFPHGLGHMLGLQVHDMGGFLADEKGTHIASPAEHPFLRCTRTLAENQVLTIEPGVYIIDSLLAQLKQDNRQQQVNWNTVDILRPFGGIRIEDNVIVHCDRTENMTRNFGLNR</sequence>